<name>CYB6_CHAGL</name>
<geneLocation type="chloroplast"/>
<keyword id="KW-0150">Chloroplast</keyword>
<keyword id="KW-0249">Electron transport</keyword>
<keyword id="KW-0349">Heme</keyword>
<keyword id="KW-0408">Iron</keyword>
<keyword id="KW-0472">Membrane</keyword>
<keyword id="KW-0479">Metal-binding</keyword>
<keyword id="KW-0602">Photosynthesis</keyword>
<keyword id="KW-0934">Plastid</keyword>
<keyword id="KW-0793">Thylakoid</keyword>
<keyword id="KW-0812">Transmembrane</keyword>
<keyword id="KW-1133">Transmembrane helix</keyword>
<keyword id="KW-0813">Transport</keyword>
<protein>
    <recommendedName>
        <fullName evidence="1">Cytochrome b6</fullName>
    </recommendedName>
</protein>
<gene>
    <name evidence="1" type="primary">petB</name>
</gene>
<reference key="1">
    <citation type="journal article" date="2002" name="Proc. Natl. Acad. Sci. U.S.A.">
        <title>The chloroplast and mitochondrial genome sequences of the charophyte Chaetosphaeridium globosum: insights into the timing of the events that restructured organelle DNAs within the green algal lineage that led to land plants.</title>
        <authorList>
            <person name="Turmel M."/>
            <person name="Otis C."/>
            <person name="Lemieux C."/>
        </authorList>
    </citation>
    <scope>NUCLEOTIDE SEQUENCE [LARGE SCALE GENOMIC DNA]</scope>
    <source>
        <strain>M1311</strain>
    </source>
</reference>
<organism>
    <name type="scientific">Chaetosphaeridium globosum</name>
    <name type="common">Charophycean green alga</name>
    <name type="synonym">Herposteiron globosum</name>
    <dbReference type="NCBI Taxonomy" id="96477"/>
    <lineage>
        <taxon>Eukaryota</taxon>
        <taxon>Viridiplantae</taxon>
        <taxon>Streptophyta</taxon>
        <taxon>Coleochaetophyceae</taxon>
        <taxon>Coleochaetales</taxon>
        <taxon>Chaetosphaeridiaceae</taxon>
        <taxon>Chaetosphaeridium</taxon>
    </lineage>
</organism>
<accession>Q8M9Z4</accession>
<sequence length="215" mass="24231">MGKVYDWFEERLEIQAIADDISSKYVPPHVNIFYCLGGITFTSFVIQVASGFAMTFYYRPTVTEAFASVQYIMTEVNFGWLIRSVHRWSASMMVLMMILHIFRVYLTGGFKKPRELTWVTGVILSVLTVSFGVTGYSLPWDQVGYWAVKIVTGVPDAIPVIGSTVVELLRGSVSVGQSTLTRFYSLHTFVLPLLTAVFMLMHFLMIRKQGISGPL</sequence>
<dbReference type="EMBL" id="AF494278">
    <property type="protein sequence ID" value="AAM96527.1"/>
    <property type="molecule type" value="Genomic_DNA"/>
</dbReference>
<dbReference type="RefSeq" id="NP_683792.1">
    <property type="nucleotide sequence ID" value="NC_004115.1"/>
</dbReference>
<dbReference type="SMR" id="Q8M9Z4"/>
<dbReference type="GeneID" id="860809"/>
<dbReference type="GO" id="GO:0009535">
    <property type="term" value="C:chloroplast thylakoid membrane"/>
    <property type="evidence" value="ECO:0007669"/>
    <property type="project" value="UniProtKB-SubCell"/>
</dbReference>
<dbReference type="GO" id="GO:0045158">
    <property type="term" value="F:electron transporter, transferring electrons within cytochrome b6/f complex of photosystem II activity"/>
    <property type="evidence" value="ECO:0007669"/>
    <property type="project" value="UniProtKB-UniRule"/>
</dbReference>
<dbReference type="GO" id="GO:0046872">
    <property type="term" value="F:metal ion binding"/>
    <property type="evidence" value="ECO:0007669"/>
    <property type="project" value="UniProtKB-KW"/>
</dbReference>
<dbReference type="GO" id="GO:0016491">
    <property type="term" value="F:oxidoreductase activity"/>
    <property type="evidence" value="ECO:0007669"/>
    <property type="project" value="InterPro"/>
</dbReference>
<dbReference type="GO" id="GO:0015979">
    <property type="term" value="P:photosynthesis"/>
    <property type="evidence" value="ECO:0007669"/>
    <property type="project" value="UniProtKB-UniRule"/>
</dbReference>
<dbReference type="GO" id="GO:0022904">
    <property type="term" value="P:respiratory electron transport chain"/>
    <property type="evidence" value="ECO:0007669"/>
    <property type="project" value="InterPro"/>
</dbReference>
<dbReference type="CDD" id="cd00284">
    <property type="entry name" value="Cytochrome_b_N"/>
    <property type="match status" value="1"/>
</dbReference>
<dbReference type="FunFam" id="1.20.810.10:FF:000001">
    <property type="entry name" value="Cytochrome b6"/>
    <property type="match status" value="1"/>
</dbReference>
<dbReference type="Gene3D" id="1.20.810.10">
    <property type="entry name" value="Cytochrome Bc1 Complex, Chain C"/>
    <property type="match status" value="1"/>
</dbReference>
<dbReference type="HAMAP" id="MF_00633">
    <property type="entry name" value="Cytb6_f_cytb6"/>
    <property type="match status" value="1"/>
</dbReference>
<dbReference type="InterPro" id="IPR005797">
    <property type="entry name" value="Cyt_b/b6_N"/>
</dbReference>
<dbReference type="InterPro" id="IPR023530">
    <property type="entry name" value="Cyt_B6_PetB"/>
</dbReference>
<dbReference type="InterPro" id="IPR027387">
    <property type="entry name" value="Cytb/b6-like_sf"/>
</dbReference>
<dbReference type="InterPro" id="IPR048259">
    <property type="entry name" value="Cytochrome_b_N_euk/bac"/>
</dbReference>
<dbReference type="InterPro" id="IPR016174">
    <property type="entry name" value="Di-haem_cyt_TM"/>
</dbReference>
<dbReference type="NCBIfam" id="NF002990">
    <property type="entry name" value="PRK03735.1"/>
    <property type="match status" value="1"/>
</dbReference>
<dbReference type="PANTHER" id="PTHR19271">
    <property type="entry name" value="CYTOCHROME B"/>
    <property type="match status" value="1"/>
</dbReference>
<dbReference type="PANTHER" id="PTHR19271:SF16">
    <property type="entry name" value="CYTOCHROME B"/>
    <property type="match status" value="1"/>
</dbReference>
<dbReference type="Pfam" id="PF00033">
    <property type="entry name" value="Cytochrome_B"/>
    <property type="match status" value="1"/>
</dbReference>
<dbReference type="PIRSF" id="PIRSF000032">
    <property type="entry name" value="Cytochrome_b6"/>
    <property type="match status" value="1"/>
</dbReference>
<dbReference type="SUPFAM" id="SSF81342">
    <property type="entry name" value="Transmembrane di-heme cytochromes"/>
    <property type="match status" value="1"/>
</dbReference>
<dbReference type="PROSITE" id="PS51002">
    <property type="entry name" value="CYTB_NTER"/>
    <property type="match status" value="1"/>
</dbReference>
<feature type="chain" id="PRO_0000061785" description="Cytochrome b6">
    <location>
        <begin position="1"/>
        <end position="215"/>
    </location>
</feature>
<feature type="transmembrane region" description="Helical" evidence="1">
    <location>
        <begin position="32"/>
        <end position="52"/>
    </location>
</feature>
<feature type="transmembrane region" description="Helical" evidence="1">
    <location>
        <begin position="90"/>
        <end position="110"/>
    </location>
</feature>
<feature type="transmembrane region" description="Helical" evidence="1">
    <location>
        <begin position="116"/>
        <end position="136"/>
    </location>
</feature>
<feature type="transmembrane region" description="Helical" evidence="1">
    <location>
        <begin position="186"/>
        <end position="206"/>
    </location>
</feature>
<feature type="binding site" description="covalent" evidence="1">
    <location>
        <position position="35"/>
    </location>
    <ligand>
        <name>heme c</name>
        <dbReference type="ChEBI" id="CHEBI:61717"/>
    </ligand>
</feature>
<feature type="binding site" description="axial binding residue" evidence="1">
    <location>
        <position position="86"/>
    </location>
    <ligand>
        <name>heme b</name>
        <dbReference type="ChEBI" id="CHEBI:60344"/>
        <label>2</label>
    </ligand>
    <ligandPart>
        <name>Fe</name>
        <dbReference type="ChEBI" id="CHEBI:18248"/>
    </ligandPart>
</feature>
<feature type="binding site" description="axial binding residue" evidence="1">
    <location>
        <position position="100"/>
    </location>
    <ligand>
        <name>heme b</name>
        <dbReference type="ChEBI" id="CHEBI:60344"/>
        <label>1</label>
    </ligand>
    <ligandPart>
        <name>Fe</name>
        <dbReference type="ChEBI" id="CHEBI:18248"/>
    </ligandPart>
</feature>
<feature type="binding site" description="axial binding residue" evidence="1">
    <location>
        <position position="187"/>
    </location>
    <ligand>
        <name>heme b</name>
        <dbReference type="ChEBI" id="CHEBI:60344"/>
        <label>2</label>
    </ligand>
    <ligandPart>
        <name>Fe</name>
        <dbReference type="ChEBI" id="CHEBI:18248"/>
    </ligandPart>
</feature>
<feature type="binding site" description="axial binding residue" evidence="1">
    <location>
        <position position="202"/>
    </location>
    <ligand>
        <name>heme b</name>
        <dbReference type="ChEBI" id="CHEBI:60344"/>
        <label>1</label>
    </ligand>
    <ligandPart>
        <name>Fe</name>
        <dbReference type="ChEBI" id="CHEBI:18248"/>
    </ligandPart>
</feature>
<proteinExistence type="inferred from homology"/>
<evidence type="ECO:0000255" key="1">
    <source>
        <dbReference type="HAMAP-Rule" id="MF_00633"/>
    </source>
</evidence>
<comment type="function">
    <text evidence="1">Component of the cytochrome b6-f complex, which mediates electron transfer between photosystem II (PSII) and photosystem I (PSI), cyclic electron flow around PSI, and state transitions.</text>
</comment>
<comment type="cofactor">
    <cofactor evidence="1">
        <name>heme b</name>
        <dbReference type="ChEBI" id="CHEBI:60344"/>
    </cofactor>
    <text evidence="1">Binds 2 heme b groups non-covalently with two histidine residues as axial ligands.</text>
</comment>
<comment type="cofactor">
    <cofactor evidence="1">
        <name>heme c</name>
        <dbReference type="ChEBI" id="CHEBI:61717"/>
    </cofactor>
    <text evidence="1">Binds one heme group covalently by a single cysteine link with no axial amino acid ligand. This heme was named heme ci.</text>
</comment>
<comment type="subunit">
    <text evidence="1">The 4 large subunits of the cytochrome b6-f complex are cytochrome b6, subunit IV (17 kDa polypeptide, PetD), cytochrome f and the Rieske protein, while the 4 small subunits are PetG, PetL, PetM and PetN. The complex functions as a dimer.</text>
</comment>
<comment type="subcellular location">
    <subcellularLocation>
        <location evidence="1">Plastid</location>
        <location evidence="1">Chloroplast thylakoid membrane</location>
        <topology evidence="1">Multi-pass membrane protein</topology>
    </subcellularLocation>
</comment>
<comment type="miscellaneous">
    <text evidence="1">Heme 1 (or BH or b566) is high-potential and absorbs at about 566 nm, and heme 2 (or BL or b562) is low-potential and absorbs at about 562 nm.</text>
</comment>
<comment type="similarity">
    <text evidence="1">Belongs to the cytochrome b family. PetB subfamily.</text>
</comment>